<sequence length="441" mass="48215">MSCCKVPVLIEAQVEMVSANELENKSLFRQEEDATQTKEASLMEQGSLSTSFPQHTPKAPKNSVLNSIKIVIFCNKLNLLLPFGPLAILVHYMIDSKGWVFLLTLVGITPLAERLGYATEQLACYTGPTVGGLLNATFGNVTELIISIFALKNGMIRVVQLTLLGSILSNMLLVLGCAFFCGGLVFYQKDQVFDKGIATVNSGLLLMAVMGILFPAVLHYTHSEVHAGSSELALSRFSSCIMLIAYAAYLFFQLKSQSNSYSPLDEESNQNEETSAEDEDPEISKWEAIIWLSILTAWVSLLSGYLVDAIEGASVSWNIPIAFISTILLPIVGNAAEHAGAIMFAMKDKLDLSLGVAIGSSIQISMFAVPFCVVIGWMMGQQMDLNFQLFETAMLFITVIVVAFFLQEGSSNYFKGLMLILCYLIVAASFFVHEDPHQDGI</sequence>
<evidence type="ECO:0000255" key="1"/>
<evidence type="ECO:0000269" key="2">
    <source>
    </source>
</evidence>
<evidence type="ECO:0000269" key="3">
    <source>
    </source>
</evidence>
<evidence type="ECO:0000269" key="4">
    <source>
    </source>
</evidence>
<evidence type="ECO:0000305" key="5"/>
<organism>
    <name type="scientific">Arabidopsis thaliana</name>
    <name type="common">Mouse-ear cress</name>
    <dbReference type="NCBI Taxonomy" id="3702"/>
    <lineage>
        <taxon>Eukaryota</taxon>
        <taxon>Viridiplantae</taxon>
        <taxon>Streptophyta</taxon>
        <taxon>Embryophyta</taxon>
        <taxon>Tracheophyta</taxon>
        <taxon>Spermatophyta</taxon>
        <taxon>Magnoliopsida</taxon>
        <taxon>eudicotyledons</taxon>
        <taxon>Gunneridae</taxon>
        <taxon>Pentapetalae</taxon>
        <taxon>rosids</taxon>
        <taxon>malvids</taxon>
        <taxon>Brassicales</taxon>
        <taxon>Brassicaceae</taxon>
        <taxon>Camelineae</taxon>
        <taxon>Arabidopsis</taxon>
    </lineage>
</organism>
<gene>
    <name type="primary">CAX2</name>
    <name type="ordered locus">At3g13320</name>
    <name type="ORF">MDC11.10</name>
    <name type="ORF">MDC11.19</name>
</gene>
<dbReference type="EMBL" id="AB024034">
    <property type="protein sequence ID" value="BAB02801.1"/>
    <property type="status" value="ALT_SEQ"/>
    <property type="molecule type" value="Genomic_DNA"/>
</dbReference>
<dbReference type="EMBL" id="CP002686">
    <property type="protein sequence ID" value="AEE75333.1"/>
    <property type="molecule type" value="Genomic_DNA"/>
</dbReference>
<dbReference type="EMBL" id="AF424628">
    <property type="protein sequence ID" value="AAL11621.1"/>
    <property type="molecule type" value="mRNA"/>
</dbReference>
<dbReference type="EMBL" id="AY097343">
    <property type="protein sequence ID" value="AAM19859.1"/>
    <property type="molecule type" value="mRNA"/>
</dbReference>
<dbReference type="EMBL" id="U57412">
    <property type="protein sequence ID" value="AAB05914.1"/>
    <property type="molecule type" value="mRNA"/>
</dbReference>
<dbReference type="RefSeq" id="NP_566452.1">
    <property type="nucleotide sequence ID" value="NM_112177.3"/>
</dbReference>
<dbReference type="SMR" id="Q39254"/>
<dbReference type="BioGRID" id="5866">
    <property type="interactions" value="5"/>
</dbReference>
<dbReference type="FunCoup" id="Q39254">
    <property type="interactions" value="1119"/>
</dbReference>
<dbReference type="IntAct" id="Q39254">
    <property type="interactions" value="5"/>
</dbReference>
<dbReference type="STRING" id="3702.Q39254"/>
<dbReference type="TCDB" id="2.A.19.2.4">
    <property type="family name" value="the ca(2+):cation antiporter (caca) family"/>
</dbReference>
<dbReference type="GlyGen" id="Q39254">
    <property type="glycosylation" value="1 site"/>
</dbReference>
<dbReference type="PaxDb" id="3702-AT3G13320.1"/>
<dbReference type="ProteomicsDB" id="223885"/>
<dbReference type="EnsemblPlants" id="AT3G13320.1">
    <property type="protein sequence ID" value="AT3G13320.1"/>
    <property type="gene ID" value="AT3G13320"/>
</dbReference>
<dbReference type="GeneID" id="820532"/>
<dbReference type="Gramene" id="AT3G13320.1">
    <property type="protein sequence ID" value="AT3G13320.1"/>
    <property type="gene ID" value="AT3G13320"/>
</dbReference>
<dbReference type="KEGG" id="ath:AT3G13320"/>
<dbReference type="Araport" id="AT3G13320"/>
<dbReference type="TAIR" id="AT3G13320">
    <property type="gene designation" value="CAX2"/>
</dbReference>
<dbReference type="eggNOG" id="KOG1397">
    <property type="taxonomic scope" value="Eukaryota"/>
</dbReference>
<dbReference type="HOGENOM" id="CLU_008721_2_1_1"/>
<dbReference type="InParanoid" id="Q39254"/>
<dbReference type="OMA" id="EMVSANE"/>
<dbReference type="PhylomeDB" id="Q39254"/>
<dbReference type="PRO" id="PR:Q39254"/>
<dbReference type="Proteomes" id="UP000006548">
    <property type="component" value="Chromosome 3"/>
</dbReference>
<dbReference type="ExpressionAtlas" id="Q39254">
    <property type="expression patterns" value="baseline and differential"/>
</dbReference>
<dbReference type="GO" id="GO:0009705">
    <property type="term" value="C:plant-type vacuole membrane"/>
    <property type="evidence" value="ECO:0000314"/>
    <property type="project" value="TAIR"/>
</dbReference>
<dbReference type="GO" id="GO:0005773">
    <property type="term" value="C:vacuole"/>
    <property type="evidence" value="ECO:0000314"/>
    <property type="project" value="TAIR"/>
</dbReference>
<dbReference type="GO" id="GO:0015369">
    <property type="term" value="F:calcium:proton antiporter activity"/>
    <property type="evidence" value="ECO:0000314"/>
    <property type="project" value="TAIR"/>
</dbReference>
<dbReference type="GO" id="GO:0006816">
    <property type="term" value="P:calcium ion transport"/>
    <property type="evidence" value="ECO:0000314"/>
    <property type="project" value="TAIR"/>
</dbReference>
<dbReference type="FunFam" id="1.20.1420.30:FF:000008">
    <property type="entry name" value="Vacuolar cation/proton exchanger"/>
    <property type="match status" value="1"/>
</dbReference>
<dbReference type="FunFam" id="1.20.1420.30:FF:000012">
    <property type="entry name" value="Vacuolar cation/proton exchanger"/>
    <property type="match status" value="1"/>
</dbReference>
<dbReference type="Gene3D" id="1.20.1420.30">
    <property type="entry name" value="NCX, central ion-binding region"/>
    <property type="match status" value="2"/>
</dbReference>
<dbReference type="InterPro" id="IPR004713">
    <property type="entry name" value="CaH_exchang"/>
</dbReference>
<dbReference type="InterPro" id="IPR004798">
    <property type="entry name" value="CAX-like"/>
</dbReference>
<dbReference type="InterPro" id="IPR004837">
    <property type="entry name" value="NaCa_Exmemb"/>
</dbReference>
<dbReference type="InterPro" id="IPR044880">
    <property type="entry name" value="NCX_ion-bd_dom_sf"/>
</dbReference>
<dbReference type="NCBIfam" id="TIGR00846">
    <property type="entry name" value="caca2"/>
    <property type="match status" value="1"/>
</dbReference>
<dbReference type="NCBIfam" id="TIGR00378">
    <property type="entry name" value="cax"/>
    <property type="match status" value="1"/>
</dbReference>
<dbReference type="PANTHER" id="PTHR31503">
    <property type="entry name" value="VACUOLAR CALCIUM ION TRANSPORTER"/>
    <property type="match status" value="1"/>
</dbReference>
<dbReference type="PANTHER" id="PTHR31503:SF48">
    <property type="entry name" value="VACUOLAR CATION_PROTON EXCHANGER 2"/>
    <property type="match status" value="1"/>
</dbReference>
<dbReference type="Pfam" id="PF01699">
    <property type="entry name" value="Na_Ca_ex"/>
    <property type="match status" value="2"/>
</dbReference>
<reference key="1">
    <citation type="journal article" date="2000" name="DNA Res.">
        <title>Structural analysis of Arabidopsis thaliana chromosome 3. I. Sequence features of the regions of 4,504,864 bp covered by sixty P1 and TAC clones.</title>
        <authorList>
            <person name="Sato S."/>
            <person name="Nakamura Y."/>
            <person name="Kaneko T."/>
            <person name="Katoh T."/>
            <person name="Asamizu E."/>
            <person name="Tabata S."/>
        </authorList>
    </citation>
    <scope>NUCLEOTIDE SEQUENCE [LARGE SCALE GENOMIC DNA]</scope>
    <source>
        <strain>cv. Columbia</strain>
    </source>
</reference>
<reference key="2">
    <citation type="journal article" date="2017" name="Plant J.">
        <title>Araport11: a complete reannotation of the Arabidopsis thaliana reference genome.</title>
        <authorList>
            <person name="Cheng C.Y."/>
            <person name="Krishnakumar V."/>
            <person name="Chan A.P."/>
            <person name="Thibaud-Nissen F."/>
            <person name="Schobel S."/>
            <person name="Town C.D."/>
        </authorList>
    </citation>
    <scope>GENOME REANNOTATION</scope>
    <source>
        <strain>cv. Columbia</strain>
    </source>
</reference>
<reference key="3">
    <citation type="journal article" date="2003" name="Science">
        <title>Empirical analysis of transcriptional activity in the Arabidopsis genome.</title>
        <authorList>
            <person name="Yamada K."/>
            <person name="Lim J."/>
            <person name="Dale J.M."/>
            <person name="Chen H."/>
            <person name="Shinn P."/>
            <person name="Palm C.J."/>
            <person name="Southwick A.M."/>
            <person name="Wu H.C."/>
            <person name="Kim C.J."/>
            <person name="Nguyen M."/>
            <person name="Pham P.K."/>
            <person name="Cheuk R.F."/>
            <person name="Karlin-Newmann G."/>
            <person name="Liu S.X."/>
            <person name="Lam B."/>
            <person name="Sakano H."/>
            <person name="Wu T."/>
            <person name="Yu G."/>
            <person name="Miranda M."/>
            <person name="Quach H.L."/>
            <person name="Tripp M."/>
            <person name="Chang C.H."/>
            <person name="Lee J.M."/>
            <person name="Toriumi M.J."/>
            <person name="Chan M.M."/>
            <person name="Tang C.C."/>
            <person name="Onodera C.S."/>
            <person name="Deng J.M."/>
            <person name="Akiyama K."/>
            <person name="Ansari Y."/>
            <person name="Arakawa T."/>
            <person name="Banh J."/>
            <person name="Banno F."/>
            <person name="Bowser L."/>
            <person name="Brooks S.Y."/>
            <person name="Carninci P."/>
            <person name="Chao Q."/>
            <person name="Choy N."/>
            <person name="Enju A."/>
            <person name="Goldsmith A.D."/>
            <person name="Gurjal M."/>
            <person name="Hansen N.F."/>
            <person name="Hayashizaki Y."/>
            <person name="Johnson-Hopson C."/>
            <person name="Hsuan V.W."/>
            <person name="Iida K."/>
            <person name="Karnes M."/>
            <person name="Khan S."/>
            <person name="Koesema E."/>
            <person name="Ishida J."/>
            <person name="Jiang P.X."/>
            <person name="Jones T."/>
            <person name="Kawai J."/>
            <person name="Kamiya A."/>
            <person name="Meyers C."/>
            <person name="Nakajima M."/>
            <person name="Narusaka M."/>
            <person name="Seki M."/>
            <person name="Sakurai T."/>
            <person name="Satou M."/>
            <person name="Tamse R."/>
            <person name="Vaysberg M."/>
            <person name="Wallender E.K."/>
            <person name="Wong C."/>
            <person name="Yamamura Y."/>
            <person name="Yuan S."/>
            <person name="Shinozaki K."/>
            <person name="Davis R.W."/>
            <person name="Theologis A."/>
            <person name="Ecker J.R."/>
        </authorList>
    </citation>
    <scope>NUCLEOTIDE SEQUENCE [LARGE SCALE MRNA]</scope>
    <source>
        <strain>cv. Columbia</strain>
    </source>
</reference>
<reference key="4">
    <citation type="journal article" date="1996" name="Proc. Natl. Acad. Sci. U.S.A.">
        <title>CAX1, an H+/Ca2+ antiporter from Arabidopsis.</title>
        <authorList>
            <person name="Hirschi K.D."/>
            <person name="Zhen R.-G."/>
            <person name="Cunningham K.W."/>
            <person name="Rea P.A."/>
            <person name="Fink G.R."/>
        </authorList>
    </citation>
    <scope>NUCLEOTIDE SEQUENCE [MRNA] OF 43-441</scope>
    <source>
        <strain>cv. Columbia</strain>
    </source>
</reference>
<reference key="5">
    <citation type="journal article" date="2001" name="J. Biol. Chem.">
        <title>Structural determinants of Ca2+ transport in the Arabidopsis H+/Ca2+ antiporter CAX1.</title>
        <authorList>
            <person name="Shigaki T."/>
            <person name="Cheng N.-H."/>
            <person name="Pittman J.K."/>
            <person name="Hirschi K.D."/>
        </authorList>
    </citation>
    <scope>ACTIVITY REGULATION</scope>
    <scope>MUTAGENESIS OF 89-LEU--LYS-97</scope>
</reference>
<reference key="6">
    <citation type="journal article" date="2001" name="Plant Physiol.">
        <title>Phylogenetic relationships within cation transporter families of Arabidopsis.</title>
        <authorList>
            <person name="Maeser P."/>
            <person name="Thomine S."/>
            <person name="Schroeder J.I."/>
            <person name="Ward J.M."/>
            <person name="Hirschi K."/>
            <person name="Sze H."/>
            <person name="Talke I.N."/>
            <person name="Amtmann A."/>
            <person name="Maathuis F.J.M."/>
            <person name="Sanders D."/>
            <person name="Harper J.F."/>
            <person name="Tchieu J."/>
            <person name="Gribskov M."/>
            <person name="Persans M.W."/>
            <person name="Salt D.E."/>
            <person name="Kim S.A."/>
            <person name="Guerinot M.L."/>
        </authorList>
    </citation>
    <scope>GENE FAMILY</scope>
    <scope>NOMENCLATURE</scope>
</reference>
<reference key="7">
    <citation type="journal article" date="2003" name="J. Biol. Chem.">
        <title>Manganese specificity determinants in the Arabidopsis metal/H+ antiporter CAX2.</title>
        <authorList>
            <person name="Shigaki T."/>
            <person name="Pittman J.K."/>
            <person name="Hirschi K.D."/>
        </authorList>
    </citation>
    <scope>FUNCTION</scope>
    <scope>ACTIVITY REGULATION</scope>
    <scope>MUTAGENESIS OF 65-SER--ASN-75; 152-LYS--THR-162 AND 177-CYS--PHE-186</scope>
</reference>
<reference key="8">
    <citation type="journal article" date="2005" name="FEBS Lett.">
        <title>Evidence of differential pH regulation of the Arabidopsis vacuolar Ca2+/H+ antiporters CAX1 and CAX2.</title>
        <authorList>
            <person name="Pittman J.K."/>
            <person name="Shigaki T."/>
            <person name="Hirschi K.D."/>
        </authorList>
    </citation>
    <scope>BIOPHYSICOCHEMICAL PROPERTIES</scope>
    <scope>MUTAGENESIS OF HIS-222 AND HIS-226</scope>
</reference>
<accession>Q39254</accession>
<accession>Q944Q1</accession>
<accession>Q9LTT6</accession>
<name>CAX2_ARATH</name>
<feature type="chain" id="PRO_0000270151" description="Vacuolar cation/proton exchanger 2">
    <location>
        <begin position="1"/>
        <end position="441"/>
    </location>
</feature>
<feature type="topological domain" description="Cytoplasmic" evidence="1">
    <location>
        <begin position="1"/>
        <end position="69"/>
    </location>
</feature>
<feature type="transmembrane region" description="Helical" evidence="1">
    <location>
        <begin position="70"/>
        <end position="90"/>
    </location>
</feature>
<feature type="topological domain" description="Extracellular" evidence="1">
    <location>
        <begin position="91"/>
        <end position="97"/>
    </location>
</feature>
<feature type="transmembrane region" description="Helical" evidence="1">
    <location>
        <begin position="98"/>
        <end position="118"/>
    </location>
</feature>
<feature type="topological domain" description="Cytoplasmic" evidence="1">
    <location>
        <begin position="119"/>
        <end position="129"/>
    </location>
</feature>
<feature type="transmembrane region" description="Helical" evidence="1">
    <location>
        <begin position="130"/>
        <end position="150"/>
    </location>
</feature>
<feature type="topological domain" description="Extracellular" evidence="1">
    <location>
        <begin position="151"/>
        <end position="166"/>
    </location>
</feature>
<feature type="transmembrane region" description="Helical" evidence="1">
    <location>
        <begin position="167"/>
        <end position="187"/>
    </location>
</feature>
<feature type="topological domain" description="Cytoplasmic" evidence="1">
    <location>
        <begin position="188"/>
        <end position="196"/>
    </location>
</feature>
<feature type="transmembrane region" description="Helical" evidence="1">
    <location>
        <begin position="197"/>
        <end position="217"/>
    </location>
</feature>
<feature type="topological domain" description="Extracellular" evidence="1">
    <location>
        <begin position="218"/>
        <end position="231"/>
    </location>
</feature>
<feature type="transmembrane region" description="Helical" evidence="1">
    <location>
        <begin position="232"/>
        <end position="252"/>
    </location>
</feature>
<feature type="topological domain" description="Cytoplasmic" evidence="1">
    <location>
        <begin position="253"/>
        <end position="286"/>
    </location>
</feature>
<feature type="transmembrane region" description="Helical" evidence="1">
    <location>
        <begin position="287"/>
        <end position="307"/>
    </location>
</feature>
<feature type="topological domain" description="Extracellular" evidence="1">
    <location>
        <begin position="308"/>
        <end position="311"/>
    </location>
</feature>
<feature type="transmembrane region" description="Helical" evidence="1">
    <location>
        <begin position="312"/>
        <end position="332"/>
    </location>
</feature>
<feature type="topological domain" description="Cytoplasmic" evidence="1">
    <location>
        <begin position="333"/>
        <end position="354"/>
    </location>
</feature>
<feature type="transmembrane region" description="Helical" evidence="1">
    <location>
        <begin position="355"/>
        <end position="375"/>
    </location>
</feature>
<feature type="topological domain" description="Extracellular" evidence="1">
    <location>
        <begin position="376"/>
        <end position="384"/>
    </location>
</feature>
<feature type="transmembrane region" description="Helical" evidence="1">
    <location>
        <begin position="385"/>
        <end position="405"/>
    </location>
</feature>
<feature type="topological domain" description="Cytoplasmic" evidence="1">
    <location>
        <begin position="406"/>
        <end position="412"/>
    </location>
</feature>
<feature type="transmembrane region" description="Helical" evidence="1">
    <location>
        <begin position="413"/>
        <end position="433"/>
    </location>
</feature>
<feature type="topological domain" description="Extracellular" evidence="1">
    <location>
        <begin position="434"/>
        <end position="441"/>
    </location>
</feature>
<feature type="region of interest" description="Cation selection" evidence="1">
    <location>
        <begin position="139"/>
        <end position="174"/>
    </location>
</feature>
<feature type="region of interest" description="Cation selection" evidence="1">
    <location>
        <begin position="333"/>
        <end position="368"/>
    </location>
</feature>
<feature type="mutagenesis site" description="Loss of Mn(2+) transport.">
    <original>SIKIVIFCN</original>
    <variation>NLQEVILGT</variation>
    <location>
        <begin position="67"/>
        <end position="75"/>
    </location>
</feature>
<feature type="mutagenesis site" description="Facilitates Ca(2+)/H(+) exchange activity." evidence="2">
    <original>LVHYMIDSK</original>
    <variation>ICTYCGVSQ</variation>
    <location>
        <begin position="89"/>
        <end position="97"/>
    </location>
</feature>
<feature type="mutagenesis site" description="Loss of Mn(2+) transport." evidence="3">
    <original>KNGMIRVVQLT</original>
    <variation>TNNKVAVVKYS</variation>
    <location>
        <begin position="152"/>
        <end position="162"/>
    </location>
</feature>
<feature type="mutagenesis site" description="Loss of Mn(2+) transport." evidence="3">
    <original>CAFFCGGLVF</original>
    <variation>TSLFCGGIAN</variation>
    <location>
        <begin position="177"/>
        <end position="186"/>
    </location>
</feature>
<feature type="mutagenesis site" description="Loss of transport activity." evidence="4">
    <original>H</original>
    <variation>A</variation>
    <location>
        <position position="222"/>
    </location>
</feature>
<feature type="mutagenesis site" description="Loss of transport activity." evidence="4">
    <original>H</original>
    <variation>D</variation>
    <location>
        <position position="222"/>
    </location>
</feature>
<feature type="mutagenesis site" description="No effect on transport activity." evidence="4">
    <original>H</original>
    <variation>K</variation>
    <location>
        <position position="222"/>
    </location>
</feature>
<feature type="mutagenesis site" description="No effect on transport activity." evidence="4">
    <original>H</original>
    <variation>A</variation>
    <location>
        <position position="226"/>
    </location>
</feature>
<feature type="sequence conflict" description="In Ref. 4; AAB05914." evidence="5" ref="4">
    <original>N</original>
    <variation>G</variation>
    <location>
        <position position="135"/>
    </location>
</feature>
<feature type="sequence conflict" description="In Ref. 4; AAB05914." evidence="5" ref="4">
    <original>CA</original>
    <variation>LR</variation>
    <location>
        <begin position="177"/>
        <end position="178"/>
    </location>
</feature>
<feature type="sequence conflict" description="In Ref. 4; AAB05914." evidence="5" ref="4">
    <original>VPFC</original>
    <variation>RPIL</variation>
    <location>
        <begin position="369"/>
        <end position="372"/>
    </location>
</feature>
<feature type="sequence conflict" description="In Ref. 4; AAB05914." evidence="5" ref="4">
    <original>A</original>
    <variation>P</variation>
    <location>
        <position position="393"/>
    </location>
</feature>
<proteinExistence type="evidence at protein level"/>
<keyword id="KW-0050">Antiport</keyword>
<keyword id="KW-0106">Calcium</keyword>
<keyword id="KW-0109">Calcium transport</keyword>
<keyword id="KW-0406">Ion transport</keyword>
<keyword id="KW-0472">Membrane</keyword>
<keyword id="KW-1185">Reference proteome</keyword>
<keyword id="KW-0812">Transmembrane</keyword>
<keyword id="KW-1133">Transmembrane helix</keyword>
<keyword id="KW-0813">Transport</keyword>
<keyword id="KW-0926">Vacuole</keyword>
<protein>
    <recommendedName>
        <fullName>Vacuolar cation/proton exchanger 2</fullName>
    </recommendedName>
    <alternativeName>
        <fullName>Ca(2+)/H(+) antiporter CAX2</fullName>
    </alternativeName>
    <alternativeName>
        <fullName>Ca(2+)/H(+) exchanger 2</fullName>
    </alternativeName>
    <alternativeName>
        <fullName>Protein CATION EXCHANGER 2</fullName>
    </alternativeName>
</protein>
<comment type="function">
    <text evidence="3">Vacuolar cation/proton exchanger (CAX). Translocates Ca(2+) and other metal ions into vacuoles using the proton gradient formed by H(+)-ATPase and H(+)-pyrophosphatase.</text>
</comment>
<comment type="activity regulation">
    <text evidence="2 3">Inhibited by excess of Ca(2+) and Cd(2+), Mn(2+), and Zn(2+).</text>
</comment>
<comment type="biophysicochemical properties">
    <phDependence>
        <text evidence="4">Optimum pH is 7.0 for cytosolic pH.</text>
    </phDependence>
</comment>
<comment type="subcellular location">
    <subcellularLocation>
        <location evidence="5">Vacuole membrane</location>
        <topology evidence="5">Multi-pass membrane protein</topology>
    </subcellularLocation>
    <text>Tonoplast.</text>
</comment>
<comment type="similarity">
    <text evidence="5">Belongs to the Ca(2+):cation antiporter (CaCA) (TC 2.A.19) family. Cation/proton exchanger (CAX) subfamily.</text>
</comment>
<comment type="sequence caution" evidence="5">
    <conflict type="erroneous gene model prediction">
        <sequence resource="EMBL-CDS" id="BAB02801"/>
    </conflict>
</comment>